<dbReference type="EC" id="3.4.24.-" evidence="1"/>
<dbReference type="EMBL" id="CP000948">
    <property type="protein sequence ID" value="ACB03027.1"/>
    <property type="molecule type" value="Genomic_DNA"/>
</dbReference>
<dbReference type="RefSeq" id="WP_000984520.1">
    <property type="nucleotide sequence ID" value="NC_010473.1"/>
</dbReference>
<dbReference type="SMR" id="B1XH97"/>
<dbReference type="MEROPS" id="M48.002"/>
<dbReference type="KEGG" id="ecd:ECDH10B_1968"/>
<dbReference type="HOGENOM" id="CLU_042266_1_0_6"/>
<dbReference type="GO" id="GO:0005886">
    <property type="term" value="C:plasma membrane"/>
    <property type="evidence" value="ECO:0007669"/>
    <property type="project" value="UniProtKB-SubCell"/>
</dbReference>
<dbReference type="GO" id="GO:0004222">
    <property type="term" value="F:metalloendopeptidase activity"/>
    <property type="evidence" value="ECO:0007669"/>
    <property type="project" value="UniProtKB-UniRule"/>
</dbReference>
<dbReference type="GO" id="GO:0008270">
    <property type="term" value="F:zinc ion binding"/>
    <property type="evidence" value="ECO:0007669"/>
    <property type="project" value="UniProtKB-UniRule"/>
</dbReference>
<dbReference type="GO" id="GO:0006508">
    <property type="term" value="P:proteolysis"/>
    <property type="evidence" value="ECO:0007669"/>
    <property type="project" value="UniProtKB-KW"/>
</dbReference>
<dbReference type="CDD" id="cd07335">
    <property type="entry name" value="M48B_HtpX_like"/>
    <property type="match status" value="1"/>
</dbReference>
<dbReference type="FunFam" id="3.30.2010.10:FF:000001">
    <property type="entry name" value="Protease HtpX"/>
    <property type="match status" value="1"/>
</dbReference>
<dbReference type="Gene3D" id="3.30.2010.10">
    <property type="entry name" value="Metalloproteases ('zincins'), catalytic domain"/>
    <property type="match status" value="1"/>
</dbReference>
<dbReference type="HAMAP" id="MF_00188">
    <property type="entry name" value="Pept_M48_protease_HtpX"/>
    <property type="match status" value="1"/>
</dbReference>
<dbReference type="InterPro" id="IPR050083">
    <property type="entry name" value="HtpX_protease"/>
</dbReference>
<dbReference type="InterPro" id="IPR022919">
    <property type="entry name" value="Pept_M48_protease_HtpX"/>
</dbReference>
<dbReference type="InterPro" id="IPR001915">
    <property type="entry name" value="Peptidase_M48"/>
</dbReference>
<dbReference type="NCBIfam" id="NF003965">
    <property type="entry name" value="PRK05457.1"/>
    <property type="match status" value="1"/>
</dbReference>
<dbReference type="PANTHER" id="PTHR43221">
    <property type="entry name" value="PROTEASE HTPX"/>
    <property type="match status" value="1"/>
</dbReference>
<dbReference type="PANTHER" id="PTHR43221:SF1">
    <property type="entry name" value="PROTEASE HTPX"/>
    <property type="match status" value="1"/>
</dbReference>
<dbReference type="Pfam" id="PF01435">
    <property type="entry name" value="Peptidase_M48"/>
    <property type="match status" value="1"/>
</dbReference>
<accession>B1XH97</accession>
<feature type="chain" id="PRO_1000098817" description="Protease HtpX">
    <location>
        <begin position="1"/>
        <end position="293"/>
    </location>
</feature>
<feature type="transmembrane region" description="Helical" evidence="1">
    <location>
        <begin position="4"/>
        <end position="24"/>
    </location>
</feature>
<feature type="transmembrane region" description="Helical" evidence="1">
    <location>
        <begin position="34"/>
        <end position="54"/>
    </location>
</feature>
<feature type="transmembrane region" description="Helical" evidence="1">
    <location>
        <begin position="158"/>
        <end position="178"/>
    </location>
</feature>
<feature type="transmembrane region" description="Helical" evidence="1">
    <location>
        <begin position="193"/>
        <end position="213"/>
    </location>
</feature>
<feature type="active site" evidence="1">
    <location>
        <position position="140"/>
    </location>
</feature>
<feature type="binding site" evidence="1">
    <location>
        <position position="139"/>
    </location>
    <ligand>
        <name>Zn(2+)</name>
        <dbReference type="ChEBI" id="CHEBI:29105"/>
        <note>catalytic</note>
    </ligand>
</feature>
<feature type="binding site" evidence="1">
    <location>
        <position position="143"/>
    </location>
    <ligand>
        <name>Zn(2+)</name>
        <dbReference type="ChEBI" id="CHEBI:29105"/>
        <note>catalytic</note>
    </ligand>
</feature>
<feature type="binding site" evidence="1">
    <location>
        <position position="222"/>
    </location>
    <ligand>
        <name>Zn(2+)</name>
        <dbReference type="ChEBI" id="CHEBI:29105"/>
        <note>catalytic</note>
    </ligand>
</feature>
<keyword id="KW-0997">Cell inner membrane</keyword>
<keyword id="KW-1003">Cell membrane</keyword>
<keyword id="KW-0378">Hydrolase</keyword>
<keyword id="KW-0472">Membrane</keyword>
<keyword id="KW-0479">Metal-binding</keyword>
<keyword id="KW-0482">Metalloprotease</keyword>
<keyword id="KW-0645">Protease</keyword>
<keyword id="KW-0812">Transmembrane</keyword>
<keyword id="KW-1133">Transmembrane helix</keyword>
<keyword id="KW-0862">Zinc</keyword>
<evidence type="ECO:0000255" key="1">
    <source>
        <dbReference type="HAMAP-Rule" id="MF_00188"/>
    </source>
</evidence>
<name>HTPX_ECODH</name>
<organism>
    <name type="scientific">Escherichia coli (strain K12 / DH10B)</name>
    <dbReference type="NCBI Taxonomy" id="316385"/>
    <lineage>
        <taxon>Bacteria</taxon>
        <taxon>Pseudomonadati</taxon>
        <taxon>Pseudomonadota</taxon>
        <taxon>Gammaproteobacteria</taxon>
        <taxon>Enterobacterales</taxon>
        <taxon>Enterobacteriaceae</taxon>
        <taxon>Escherichia</taxon>
    </lineage>
</organism>
<comment type="cofactor">
    <cofactor evidence="1">
        <name>Zn(2+)</name>
        <dbReference type="ChEBI" id="CHEBI:29105"/>
    </cofactor>
    <text evidence="1">Binds 1 zinc ion per subunit.</text>
</comment>
<comment type="subcellular location">
    <subcellularLocation>
        <location evidence="1">Cell inner membrane</location>
        <topology evidence="1">Multi-pass membrane protein</topology>
    </subcellularLocation>
</comment>
<comment type="similarity">
    <text evidence="1">Belongs to the peptidase M48B family.</text>
</comment>
<reference key="1">
    <citation type="journal article" date="2008" name="J. Bacteriol.">
        <title>The complete genome sequence of Escherichia coli DH10B: insights into the biology of a laboratory workhorse.</title>
        <authorList>
            <person name="Durfee T."/>
            <person name="Nelson R."/>
            <person name="Baldwin S."/>
            <person name="Plunkett G. III"/>
            <person name="Burland V."/>
            <person name="Mau B."/>
            <person name="Petrosino J.F."/>
            <person name="Qin X."/>
            <person name="Muzny D.M."/>
            <person name="Ayele M."/>
            <person name="Gibbs R.A."/>
            <person name="Csorgo B."/>
            <person name="Posfai G."/>
            <person name="Weinstock G.M."/>
            <person name="Blattner F.R."/>
        </authorList>
    </citation>
    <scope>NUCLEOTIDE SEQUENCE [LARGE SCALE GENOMIC DNA]</scope>
    <source>
        <strain>K12 / DH10B</strain>
    </source>
</reference>
<sequence>MMRIALFLLTNLAVMVVFGLVLSLTGIQSSSVQGLMIMALLFGFGGSFVSLLMSKWMALRSVGGEVIEQPRNERERWLVNTVATQARQAGIAMPQVAIYHAPDINAFATGARRDASLVAVSTGLLQNMSPDEAEAVIAHEISHIANGDMVTMTLIQGVVNTFVIFISRILAQLAAGFMGGNRDEGEESNGNPLIYFAVATVLELVFGILASIITMWFSRHREFHADAGSAKLVGREKMIAALQRLKTSYEPQEATSMMALCINGKSKSLSELFMTHPPLDKRIEALRTGEYLK</sequence>
<protein>
    <recommendedName>
        <fullName evidence="1">Protease HtpX</fullName>
        <ecNumber evidence="1">3.4.24.-</ecNumber>
    </recommendedName>
    <alternativeName>
        <fullName evidence="1">Heat shock protein HtpX</fullName>
    </alternativeName>
</protein>
<proteinExistence type="inferred from homology"/>
<gene>
    <name evidence="1" type="primary">htpX</name>
    <name type="ordered locus">ECDH10B_1968</name>
</gene>